<reference key="1">
    <citation type="journal article" date="2003" name="Proc. Natl. Acad. Sci. U.S.A.">
        <title>The complete genome sequence of Chromobacterium violaceum reveals remarkable and exploitable bacterial adaptability.</title>
        <authorList>
            <person name="Vasconcelos A.T.R."/>
            <person name="de Almeida D.F."/>
            <person name="Hungria M."/>
            <person name="Guimaraes C.T."/>
            <person name="Antonio R.V."/>
            <person name="Almeida F.C."/>
            <person name="de Almeida L.G.P."/>
            <person name="de Almeida R."/>
            <person name="Alves-Gomes J.A."/>
            <person name="Andrade E.M."/>
            <person name="Araripe J."/>
            <person name="de Araujo M.F.F."/>
            <person name="Astolfi-Filho S."/>
            <person name="Azevedo V."/>
            <person name="Baptista A.J."/>
            <person name="Bataus L.A.M."/>
            <person name="Batista J.S."/>
            <person name="Belo A."/>
            <person name="van den Berg C."/>
            <person name="Bogo M."/>
            <person name="Bonatto S."/>
            <person name="Bordignon J."/>
            <person name="Brigido M.M."/>
            <person name="Brito C.A."/>
            <person name="Brocchi M."/>
            <person name="Burity H.A."/>
            <person name="Camargo A.A."/>
            <person name="Cardoso D.D.P."/>
            <person name="Carneiro N.P."/>
            <person name="Carraro D.M."/>
            <person name="Carvalho C.M.B."/>
            <person name="Cascardo J.C.M."/>
            <person name="Cavada B.S."/>
            <person name="Chueire L.M.O."/>
            <person name="Creczynski-Pasa T.B."/>
            <person name="Cunha-Junior N.C."/>
            <person name="Fagundes N."/>
            <person name="Falcao C.L."/>
            <person name="Fantinatti F."/>
            <person name="Farias I.P."/>
            <person name="Felipe M.S.S."/>
            <person name="Ferrari L.P."/>
            <person name="Ferro J.A."/>
            <person name="Ferro M.I.T."/>
            <person name="Franco G.R."/>
            <person name="Freitas N.S.A."/>
            <person name="Furlan L.R."/>
            <person name="Gazzinelli R.T."/>
            <person name="Gomes E.A."/>
            <person name="Goncalves P.R."/>
            <person name="Grangeiro T.B."/>
            <person name="Grattapaglia D."/>
            <person name="Grisard E.C."/>
            <person name="Hanna E.S."/>
            <person name="Jardim S.N."/>
            <person name="Laurino J."/>
            <person name="Leoi L.C.T."/>
            <person name="Lima L.F.A."/>
            <person name="Loureiro M.F."/>
            <person name="Lyra M.C.C.P."/>
            <person name="Madeira H.M.F."/>
            <person name="Manfio G.P."/>
            <person name="Maranhao A.Q."/>
            <person name="Martins W.S."/>
            <person name="di Mauro S.M.Z."/>
            <person name="de Medeiros S.R.B."/>
            <person name="Meissner R.V."/>
            <person name="Moreira M.A.M."/>
            <person name="Nascimento F.F."/>
            <person name="Nicolas M.F."/>
            <person name="Oliveira J.G."/>
            <person name="Oliveira S.C."/>
            <person name="Paixao R.F.C."/>
            <person name="Parente J.A."/>
            <person name="Pedrosa F.O."/>
            <person name="Pena S.D.J."/>
            <person name="Pereira J.O."/>
            <person name="Pereira M."/>
            <person name="Pinto L.S.R.C."/>
            <person name="Pinto L.S."/>
            <person name="Porto J.I.R."/>
            <person name="Potrich D.P."/>
            <person name="Ramalho-Neto C.E."/>
            <person name="Reis A.M.M."/>
            <person name="Rigo L.U."/>
            <person name="Rondinelli E."/>
            <person name="Santos E.B.P."/>
            <person name="Santos F.R."/>
            <person name="Schneider M.P.C."/>
            <person name="Seuanez H.N."/>
            <person name="Silva A.M.R."/>
            <person name="da Silva A.L.C."/>
            <person name="Silva D.W."/>
            <person name="Silva R."/>
            <person name="Simoes I.C."/>
            <person name="Simon D."/>
            <person name="Soares C.M.A."/>
            <person name="Soares R.B.A."/>
            <person name="Souza E.M."/>
            <person name="Souza K.R.L."/>
            <person name="Souza R.C."/>
            <person name="Steffens M.B.R."/>
            <person name="Steindel M."/>
            <person name="Teixeira S.R."/>
            <person name="Urmenyi T."/>
            <person name="Vettore A."/>
            <person name="Wassem R."/>
            <person name="Zaha A."/>
            <person name="Simpson A.J.G."/>
        </authorList>
    </citation>
    <scope>NUCLEOTIDE SEQUENCE [LARGE SCALE GENOMIC DNA]</scope>
    <source>
        <strain>ATCC 12472 / DSM 30191 / JCM 1249 / CCUG 213 / NBRC 12614 / NCIMB 9131 / NCTC 9757 / MK</strain>
    </source>
</reference>
<protein>
    <recommendedName>
        <fullName evidence="1">Transcriptional repressor NrdR</fullName>
    </recommendedName>
</protein>
<gene>
    <name evidence="1" type="primary">nrdR</name>
    <name type="ordered locus">CV_1287</name>
</gene>
<evidence type="ECO:0000255" key="1">
    <source>
        <dbReference type="HAMAP-Rule" id="MF_00440"/>
    </source>
</evidence>
<feature type="chain" id="PRO_0000182284" description="Transcriptional repressor NrdR">
    <location>
        <begin position="1"/>
        <end position="152"/>
    </location>
</feature>
<feature type="domain" description="ATP-cone" evidence="1">
    <location>
        <begin position="49"/>
        <end position="139"/>
    </location>
</feature>
<feature type="zinc finger region" evidence="1">
    <location>
        <begin position="3"/>
        <end position="34"/>
    </location>
</feature>
<accession>Q7NYI7</accession>
<proteinExistence type="inferred from homology"/>
<dbReference type="EMBL" id="AE016825">
    <property type="protein sequence ID" value="AAQ58962.1"/>
    <property type="molecule type" value="Genomic_DNA"/>
</dbReference>
<dbReference type="RefSeq" id="WP_011134841.1">
    <property type="nucleotide sequence ID" value="NC_005085.1"/>
</dbReference>
<dbReference type="SMR" id="Q7NYI7"/>
<dbReference type="STRING" id="243365.CV_1287"/>
<dbReference type="GeneID" id="66366948"/>
<dbReference type="KEGG" id="cvi:CV_1287"/>
<dbReference type="eggNOG" id="COG1327">
    <property type="taxonomic scope" value="Bacteria"/>
</dbReference>
<dbReference type="HOGENOM" id="CLU_108412_0_0_4"/>
<dbReference type="OrthoDB" id="9807461at2"/>
<dbReference type="Proteomes" id="UP000001424">
    <property type="component" value="Chromosome"/>
</dbReference>
<dbReference type="GO" id="GO:0005524">
    <property type="term" value="F:ATP binding"/>
    <property type="evidence" value="ECO:0007669"/>
    <property type="project" value="UniProtKB-KW"/>
</dbReference>
<dbReference type="GO" id="GO:0003677">
    <property type="term" value="F:DNA binding"/>
    <property type="evidence" value="ECO:0007669"/>
    <property type="project" value="UniProtKB-KW"/>
</dbReference>
<dbReference type="GO" id="GO:0008270">
    <property type="term" value="F:zinc ion binding"/>
    <property type="evidence" value="ECO:0007669"/>
    <property type="project" value="UniProtKB-UniRule"/>
</dbReference>
<dbReference type="GO" id="GO:0045892">
    <property type="term" value="P:negative regulation of DNA-templated transcription"/>
    <property type="evidence" value="ECO:0007669"/>
    <property type="project" value="UniProtKB-UniRule"/>
</dbReference>
<dbReference type="HAMAP" id="MF_00440">
    <property type="entry name" value="NrdR"/>
    <property type="match status" value="1"/>
</dbReference>
<dbReference type="InterPro" id="IPR005144">
    <property type="entry name" value="ATP-cone_dom"/>
</dbReference>
<dbReference type="InterPro" id="IPR055173">
    <property type="entry name" value="NrdR-like_N"/>
</dbReference>
<dbReference type="InterPro" id="IPR003796">
    <property type="entry name" value="RNR_NrdR-like"/>
</dbReference>
<dbReference type="NCBIfam" id="TIGR00244">
    <property type="entry name" value="transcriptional regulator NrdR"/>
    <property type="match status" value="1"/>
</dbReference>
<dbReference type="PANTHER" id="PTHR30455">
    <property type="entry name" value="TRANSCRIPTIONAL REPRESSOR NRDR"/>
    <property type="match status" value="1"/>
</dbReference>
<dbReference type="PANTHER" id="PTHR30455:SF2">
    <property type="entry name" value="TRANSCRIPTIONAL REPRESSOR NRDR"/>
    <property type="match status" value="1"/>
</dbReference>
<dbReference type="Pfam" id="PF03477">
    <property type="entry name" value="ATP-cone"/>
    <property type="match status" value="1"/>
</dbReference>
<dbReference type="Pfam" id="PF22811">
    <property type="entry name" value="Zn_ribbon_NrdR"/>
    <property type="match status" value="1"/>
</dbReference>
<dbReference type="PROSITE" id="PS51161">
    <property type="entry name" value="ATP_CONE"/>
    <property type="match status" value="1"/>
</dbReference>
<sequence length="152" mass="17485">MKCAFCGNPDTQVIDSRVSEDGSSIRRRRRCPACDKRFTTFETADVRMPQVVKTAGHRSEFDIEKVRTSFLRALHKRPVSTTLVDEAIDRICHKLLQLGEREVSSRQIGEMVMNELARLDKVAYVRFASVYRSFQDISEFTDAIKEIQKSSH</sequence>
<organism>
    <name type="scientific">Chromobacterium violaceum (strain ATCC 12472 / DSM 30191 / JCM 1249 / CCUG 213 / NBRC 12614 / NCIMB 9131 / NCTC 9757 / MK)</name>
    <dbReference type="NCBI Taxonomy" id="243365"/>
    <lineage>
        <taxon>Bacteria</taxon>
        <taxon>Pseudomonadati</taxon>
        <taxon>Pseudomonadota</taxon>
        <taxon>Betaproteobacteria</taxon>
        <taxon>Neisseriales</taxon>
        <taxon>Chromobacteriaceae</taxon>
        <taxon>Chromobacterium</taxon>
    </lineage>
</organism>
<name>NRDR_CHRVO</name>
<comment type="function">
    <text evidence="1">Negatively regulates transcription of bacterial ribonucleotide reductase nrd genes and operons by binding to NrdR-boxes.</text>
</comment>
<comment type="cofactor">
    <cofactor evidence="1">
        <name>Zn(2+)</name>
        <dbReference type="ChEBI" id="CHEBI:29105"/>
    </cofactor>
    <text evidence="1">Binds 1 zinc ion.</text>
</comment>
<comment type="similarity">
    <text evidence="1">Belongs to the NrdR family.</text>
</comment>
<keyword id="KW-0067">ATP-binding</keyword>
<keyword id="KW-0238">DNA-binding</keyword>
<keyword id="KW-0479">Metal-binding</keyword>
<keyword id="KW-0547">Nucleotide-binding</keyword>
<keyword id="KW-1185">Reference proteome</keyword>
<keyword id="KW-0678">Repressor</keyword>
<keyword id="KW-0804">Transcription</keyword>
<keyword id="KW-0805">Transcription regulation</keyword>
<keyword id="KW-0862">Zinc</keyword>
<keyword id="KW-0863">Zinc-finger</keyword>